<feature type="chain" id="PRO_0000349190" description="Glutaredoxin domain-containing cysteine-rich protein 1">
    <location>
        <begin position="1"/>
        <end position="290"/>
    </location>
</feature>
<feature type="domain" description="Glutaredoxin" evidence="1">
    <location>
        <begin position="127"/>
        <end position="234"/>
    </location>
</feature>
<organism>
    <name type="scientific">Mus musculus</name>
    <name type="common">Mouse</name>
    <dbReference type="NCBI Taxonomy" id="10090"/>
    <lineage>
        <taxon>Eukaryota</taxon>
        <taxon>Metazoa</taxon>
        <taxon>Chordata</taxon>
        <taxon>Craniata</taxon>
        <taxon>Vertebrata</taxon>
        <taxon>Euteleostomi</taxon>
        <taxon>Mammalia</taxon>
        <taxon>Eutheria</taxon>
        <taxon>Euarchontoglires</taxon>
        <taxon>Glires</taxon>
        <taxon>Rodentia</taxon>
        <taxon>Myomorpha</taxon>
        <taxon>Muroidea</taxon>
        <taxon>Muridae</taxon>
        <taxon>Murinae</taxon>
        <taxon>Mus</taxon>
        <taxon>Mus</taxon>
    </lineage>
</organism>
<accession>Q50H32</accession>
<gene>
    <name type="primary">Grxcr1</name>
    <name type="synonym">pi</name>
</gene>
<proteinExistence type="evidence at protein level"/>
<name>GRCR1_MOUSE</name>
<evidence type="ECO:0000255" key="1">
    <source>
        <dbReference type="PROSITE-ProRule" id="PRU00686"/>
    </source>
</evidence>
<evidence type="ECO:0000269" key="2">
    <source>
    </source>
</evidence>
<evidence type="ECO:0000269" key="3">
    <source>
    </source>
</evidence>
<evidence type="ECO:0000305" key="4"/>
<keyword id="KW-0966">Cell projection</keyword>
<keyword id="KW-0969">Cilium</keyword>
<keyword id="KW-0209">Deafness</keyword>
<keyword id="KW-1009">Hearing</keyword>
<keyword id="KW-1185">Reference proteome</keyword>
<sequence length="290" mass="32402">MLRRETKPESDRPRKVRFRIASSHSGRVLKEVYEDGQAPGSLDSECASICAIDGLSDSEGQQNGHIGSEDNEQEKDQDNLLVLARTASEKAFGTRRVNILSKNGTVRGVKYKVSAGQALFNNLTKVLQQPSADLEFDRVVIYTTCLRVVRTTFERCELVRKIFQNHRVKFEEKNIALNGDYGKELDERCRRVSEAPSLPVVFIDGHYLGGAEKILSMNESGELQDLLTKIERVQHPHECPSCGGFGFLPCSVCHGSKMSVFRNCFTDAFKALKCTACNENGLQRCKNCTC</sequence>
<protein>
    <recommendedName>
        <fullName>Glutaredoxin domain-containing cysteine-rich protein 1</fullName>
    </recommendedName>
</protein>
<reference key="1">
    <citation type="journal article" date="2010" name="Am. J. Hum. Genet.">
        <title>Mutations in Grxcr1 are the basis for inner ear dysfunction in the pirouette mouse.</title>
        <authorList>
            <person name="Odeh H."/>
            <person name="Hunker K.L."/>
            <person name="Belyantseva I.A."/>
            <person name="Azaiez H."/>
            <person name="Avenarius M.R."/>
            <person name="Zheng L."/>
            <person name="Peters L.M."/>
            <person name="Gagnon L.H."/>
            <person name="Hagiwara N."/>
            <person name="Skynner M.J."/>
            <person name="Brilliant M.H."/>
            <person name="Allen N.D."/>
            <person name="Riazuddin S."/>
            <person name="Johnson K.R."/>
            <person name="Raphael Y."/>
            <person name="Najmabadi H."/>
            <person name="Friedman T.B."/>
            <person name="Bartles J.R."/>
            <person name="Smith R.J."/>
            <person name="Kohrman D.C."/>
        </authorList>
    </citation>
    <scope>NUCLEOTIDE SEQUENCE [MRNA]</scope>
    <scope>FUNCTION</scope>
    <scope>SUBCELLULAR LOCATION</scope>
    <scope>TISSUE SPECIFICITY</scope>
    <scope>DISEASE</scope>
    <source>
        <strain>C57BL/6J</strain>
    </source>
</reference>
<reference key="2">
    <citation type="journal article" date="2004" name="Genome Res.">
        <title>The status, quality, and expansion of the NIH full-length cDNA project: the Mammalian Gene Collection (MGC).</title>
        <authorList>
            <consortium name="The MGC Project Team"/>
        </authorList>
    </citation>
    <scope>NUCLEOTIDE SEQUENCE [LARGE SCALE MRNA]</scope>
    <source>
        <tissue>Brain</tissue>
    </source>
</reference>
<reference key="3">
    <citation type="journal article" date="2000" name="J. Neurocytol.">
        <title>Hair cells in the inner ear of the pirouette and shaker 2 mutant mice.</title>
        <authorList>
            <person name="Beyer L.A."/>
            <person name="Odeh H."/>
            <person name="Probst F.J."/>
            <person name="Lambert E.H."/>
            <person name="Dolan D.F."/>
            <person name="Camper S.A."/>
            <person name="Kohrman D.C."/>
            <person name="Raphael Y."/>
        </authorList>
    </citation>
    <scope>DISEASE</scope>
</reference>
<dbReference type="EMBL" id="AY616753">
    <property type="protein sequence ID" value="AAU84851.1"/>
    <property type="molecule type" value="mRNA"/>
</dbReference>
<dbReference type="EMBL" id="BC147268">
    <property type="protein sequence ID" value="AAI47269.1"/>
    <property type="molecule type" value="mRNA"/>
</dbReference>
<dbReference type="EMBL" id="BC147269">
    <property type="protein sequence ID" value="AAI47270.1"/>
    <property type="molecule type" value="mRNA"/>
</dbReference>
<dbReference type="CCDS" id="CCDS19319.2"/>
<dbReference type="RefSeq" id="NP_001018019.3">
    <property type="nucleotide sequence ID" value="NM_001018019.3"/>
</dbReference>
<dbReference type="FunCoup" id="Q50H32">
    <property type="interactions" value="22"/>
</dbReference>
<dbReference type="STRING" id="10090.ENSMUSP00000092305"/>
<dbReference type="PhosphoSitePlus" id="Q50H32"/>
<dbReference type="PaxDb" id="10090-ENSMUSP00000092305"/>
<dbReference type="DNASU" id="433899"/>
<dbReference type="Ensembl" id="ENSMUST00000094715.9">
    <property type="protein sequence ID" value="ENSMUSP00000092305.6"/>
    <property type="gene ID" value="ENSMUSG00000068082.14"/>
</dbReference>
<dbReference type="GeneID" id="433899"/>
<dbReference type="KEGG" id="mmu:433899"/>
<dbReference type="AGR" id="MGI:3577767"/>
<dbReference type="CTD" id="389207"/>
<dbReference type="MGI" id="MGI:3577767">
    <property type="gene designation" value="Grxcr1"/>
</dbReference>
<dbReference type="eggNOG" id="KOG2824">
    <property type="taxonomic scope" value="Eukaryota"/>
</dbReference>
<dbReference type="GeneTree" id="ENSGT00940000159219"/>
<dbReference type="InParanoid" id="Q50H32"/>
<dbReference type="OrthoDB" id="423313at2759"/>
<dbReference type="PhylomeDB" id="Q50H32"/>
<dbReference type="BioGRID-ORCS" id="433899">
    <property type="hits" value="0 hits in 77 CRISPR screens"/>
</dbReference>
<dbReference type="PRO" id="PR:Q50H32"/>
<dbReference type="Proteomes" id="UP000000589">
    <property type="component" value="Chromosome 5"/>
</dbReference>
<dbReference type="RNAct" id="Q50H32">
    <property type="molecule type" value="protein"/>
</dbReference>
<dbReference type="GO" id="GO:0005829">
    <property type="term" value="C:cytosol"/>
    <property type="evidence" value="ECO:0000304"/>
    <property type="project" value="Reactome"/>
</dbReference>
<dbReference type="GO" id="GO:0060091">
    <property type="term" value="C:kinocilium"/>
    <property type="evidence" value="ECO:0000314"/>
    <property type="project" value="UniProtKB"/>
</dbReference>
<dbReference type="GO" id="GO:0005902">
    <property type="term" value="C:microvillus"/>
    <property type="evidence" value="ECO:0007669"/>
    <property type="project" value="UniProtKB-SubCell"/>
</dbReference>
<dbReference type="GO" id="GO:0032420">
    <property type="term" value="C:stereocilium"/>
    <property type="evidence" value="ECO:0000314"/>
    <property type="project" value="UniProtKB"/>
</dbReference>
<dbReference type="GO" id="GO:0060088">
    <property type="term" value="P:auditory receptor cell stereocilium organization"/>
    <property type="evidence" value="ECO:0000315"/>
    <property type="project" value="MGI"/>
</dbReference>
<dbReference type="GO" id="GO:0070588">
    <property type="term" value="P:calcium ion transmembrane transport"/>
    <property type="evidence" value="ECO:0000315"/>
    <property type="project" value="MGI"/>
</dbReference>
<dbReference type="GO" id="GO:0000902">
    <property type="term" value="P:cell morphogenesis"/>
    <property type="evidence" value="ECO:0000315"/>
    <property type="project" value="MGI"/>
</dbReference>
<dbReference type="GO" id="GO:0090102">
    <property type="term" value="P:cochlea development"/>
    <property type="evidence" value="ECO:0000315"/>
    <property type="project" value="MGI"/>
</dbReference>
<dbReference type="GO" id="GO:0051649">
    <property type="term" value="P:establishment of localization in cell"/>
    <property type="evidence" value="ECO:0000315"/>
    <property type="project" value="MGI"/>
</dbReference>
<dbReference type="GO" id="GO:0006887">
    <property type="term" value="P:exocytosis"/>
    <property type="evidence" value="ECO:0000315"/>
    <property type="project" value="MGI"/>
</dbReference>
<dbReference type="GO" id="GO:0042491">
    <property type="term" value="P:inner ear auditory receptor cell differentiation"/>
    <property type="evidence" value="ECO:0000315"/>
    <property type="project" value="MGI"/>
</dbReference>
<dbReference type="GO" id="GO:0048839">
    <property type="term" value="P:inner ear development"/>
    <property type="evidence" value="ECO:0000315"/>
    <property type="project" value="MGI"/>
</dbReference>
<dbReference type="GO" id="GO:0060119">
    <property type="term" value="P:inner ear receptor cell development"/>
    <property type="evidence" value="ECO:0000315"/>
    <property type="project" value="UniProtKB"/>
</dbReference>
<dbReference type="GO" id="GO:0060122">
    <property type="term" value="P:inner ear receptor cell stereocilium organization"/>
    <property type="evidence" value="ECO:0000315"/>
    <property type="project" value="UniProtKB"/>
</dbReference>
<dbReference type="GO" id="GO:0007009">
    <property type="term" value="P:plasma membrane organization"/>
    <property type="evidence" value="ECO:0000315"/>
    <property type="project" value="MGI"/>
</dbReference>
<dbReference type="GO" id="GO:1905144">
    <property type="term" value="P:response to acetylcholine"/>
    <property type="evidence" value="ECO:0000315"/>
    <property type="project" value="MGI"/>
</dbReference>
<dbReference type="GO" id="GO:0051592">
    <property type="term" value="P:response to calcium ion"/>
    <property type="evidence" value="ECO:0000315"/>
    <property type="project" value="MGI"/>
</dbReference>
<dbReference type="GO" id="GO:0007605">
    <property type="term" value="P:sensory perception of sound"/>
    <property type="evidence" value="ECO:0000315"/>
    <property type="project" value="UniProtKB"/>
</dbReference>
<dbReference type="GO" id="GO:0060118">
    <property type="term" value="P:vestibular receptor cell development"/>
    <property type="evidence" value="ECO:0000315"/>
    <property type="project" value="UniProtKB"/>
</dbReference>
<dbReference type="CDD" id="cd03031">
    <property type="entry name" value="GRX_GRX_like"/>
    <property type="match status" value="1"/>
</dbReference>
<dbReference type="FunFam" id="3.40.30.10:FF:000178">
    <property type="entry name" value="glutaredoxin domain-containing cysteine-rich protein 1"/>
    <property type="match status" value="1"/>
</dbReference>
<dbReference type="Gene3D" id="3.40.30.10">
    <property type="entry name" value="Glutaredoxin"/>
    <property type="match status" value="1"/>
</dbReference>
<dbReference type="InterPro" id="IPR002109">
    <property type="entry name" value="Glutaredoxin"/>
</dbReference>
<dbReference type="InterPro" id="IPR042797">
    <property type="entry name" value="GRXCR1"/>
</dbReference>
<dbReference type="InterPro" id="IPR036249">
    <property type="entry name" value="Thioredoxin-like_sf"/>
</dbReference>
<dbReference type="PANTHER" id="PTHR46990">
    <property type="entry name" value="GLUTAREDOXIN DOMAIN-CONTAINING CYSTEINE-RICH PROTEIN 1"/>
    <property type="match status" value="1"/>
</dbReference>
<dbReference type="PANTHER" id="PTHR46990:SF1">
    <property type="entry name" value="GLUTAREDOXIN DOMAIN-CONTAINING CYSTEINE-RICH PROTEIN 1"/>
    <property type="match status" value="1"/>
</dbReference>
<dbReference type="Pfam" id="PF00462">
    <property type="entry name" value="Glutaredoxin"/>
    <property type="match status" value="1"/>
</dbReference>
<dbReference type="Pfam" id="PF23733">
    <property type="entry name" value="GRXCR1-2_C"/>
    <property type="match status" value="1"/>
</dbReference>
<dbReference type="SUPFAM" id="SSF52833">
    <property type="entry name" value="Thioredoxin-like"/>
    <property type="match status" value="1"/>
</dbReference>
<dbReference type="PROSITE" id="PS51354">
    <property type="entry name" value="GLUTAREDOXIN_2"/>
    <property type="match status" value="1"/>
</dbReference>
<comment type="function">
    <text evidence="3">May play a role in actin filament architecture in developing stereocilia of sensory cells.</text>
</comment>
<comment type="subcellular location">
    <subcellularLocation>
        <location evidence="3">Cell projection</location>
        <location evidence="3">Stereocilium</location>
    </subcellularLocation>
    <subcellularLocation>
        <location evidence="3">Cell projection</location>
        <location evidence="3">Microvillus</location>
    </subcellularLocation>
    <subcellularLocation>
        <location evidence="3">Cell projection</location>
        <location evidence="3">Kinocilium</location>
    </subcellularLocation>
    <text>In the inner ear, localized to stereocilia, apical microvilli of sensory cells and kinocilia.</text>
</comment>
<comment type="tissue specificity">
    <text evidence="3">In the inner ear, expressed predominantly in sensory hair cells and their stereocilia bundles with higher levels in outer hair cells (OHC) at P1 and in inner hair cells (IHC) at P5. At P1, expression is prominent in each row of stereocilia within bundles including immature shorter stereocilia. Expression is also observed in apical microvilli of sensory cells at P1 and in kinocilia at P1 and P5. In the adult, expression is localized throughout the length of the stereocilia of both OHC and IHC (at protein level).</text>
</comment>
<comment type="disease">
    <text evidence="2 3">Defects in Grxcr1 are the cause of the pirouette (pi) phenotype which is characterized by vestibular defects and profound deafness with affected mice displaying abnormally thin and slightly shortened sterocilia.</text>
</comment>
<comment type="similarity">
    <text evidence="4">Belongs to the GRXCR1 family.</text>
</comment>